<feature type="chain" id="PRO_0000124018" description="Dolichyl-diphosphooligosaccharide--protein glycosyltransferase subunit DAD1">
    <location>
        <begin position="1"/>
        <end position="112"/>
    </location>
</feature>
<feature type="topological domain" description="Cytoplasmic" evidence="3">
    <location>
        <begin position="1"/>
        <end position="27"/>
    </location>
</feature>
<feature type="transmembrane region" description="Helical" evidence="3">
    <location>
        <begin position="28"/>
        <end position="48"/>
    </location>
</feature>
<feature type="topological domain" description="Lumenal" evidence="3">
    <location>
        <begin position="49"/>
        <end position="51"/>
    </location>
</feature>
<feature type="transmembrane region" description="Helical" evidence="3">
    <location>
        <begin position="52"/>
        <end position="72"/>
    </location>
</feature>
<feature type="topological domain" description="Cytoplasmic" evidence="3">
    <location>
        <begin position="73"/>
        <end position="91"/>
    </location>
</feature>
<feature type="transmembrane region" description="Helical" evidence="3">
    <location>
        <begin position="92"/>
        <end position="112"/>
    </location>
</feature>
<proteinExistence type="evidence at protein level"/>
<sequence>MVELSSVISKFYNDYVQNTPKKLKLVDIYLGYILLTGIIQFVYCCLVGTFPFNSFLSGFISTVSCFVLAVCLRLQANPQNKSVFAGISPERGFADFIFAHVILHLVVMNFIG</sequence>
<keyword id="KW-0053">Apoptosis</keyword>
<keyword id="KW-0256">Endoplasmic reticulum</keyword>
<keyword id="KW-0472">Membrane</keyword>
<keyword id="KW-1185">Reference proteome</keyword>
<keyword id="KW-0812">Transmembrane</keyword>
<keyword id="KW-1133">Transmembrane helix</keyword>
<evidence type="ECO:0000250" key="1">
    <source>
        <dbReference type="UniProtKB" id="E2R4X3"/>
    </source>
</evidence>
<evidence type="ECO:0000250" key="2">
    <source>
        <dbReference type="UniProtKB" id="P61803"/>
    </source>
</evidence>
<evidence type="ECO:0000255" key="3"/>
<evidence type="ECO:0000269" key="4">
    <source>
    </source>
</evidence>
<evidence type="ECO:0000303" key="5">
    <source>
    </source>
</evidence>
<evidence type="ECO:0000305" key="6"/>
<evidence type="ECO:0000312" key="7">
    <source>
        <dbReference type="FlyBase" id="FBgn0263852"/>
    </source>
</evidence>
<accession>Q9VLM5</accession>
<accession>A0A1B2AKP8</accession>
<dbReference type="EMBL" id="AE014134">
    <property type="protein sequence ID" value="AAF52660.1"/>
    <property type="molecule type" value="Genomic_DNA"/>
</dbReference>
<dbReference type="EMBL" id="AY113429">
    <property type="protein sequence ID" value="AAM29434.1"/>
    <property type="molecule type" value="mRNA"/>
</dbReference>
<dbReference type="EMBL" id="KX531951">
    <property type="protein sequence ID" value="ANY27761.1"/>
    <property type="molecule type" value="mRNA"/>
</dbReference>
<dbReference type="RefSeq" id="NP_609222.1">
    <property type="nucleotide sequence ID" value="NM_135378.4"/>
</dbReference>
<dbReference type="SMR" id="Q9VLM5"/>
<dbReference type="BioGRID" id="60283">
    <property type="interactions" value="16"/>
</dbReference>
<dbReference type="ComplexPortal" id="CPX-8761">
    <property type="entry name" value="Oligosaccharyltransferase A complex"/>
</dbReference>
<dbReference type="ComplexPortal" id="CPX-8803">
    <property type="entry name" value="Oligosaccharyltransferase B complex"/>
</dbReference>
<dbReference type="FunCoup" id="Q9VLM5">
    <property type="interactions" value="1467"/>
</dbReference>
<dbReference type="IntAct" id="Q9VLM5">
    <property type="interactions" value="33"/>
</dbReference>
<dbReference type="STRING" id="7227.FBpp0079324"/>
<dbReference type="PaxDb" id="7227-FBpp0079324"/>
<dbReference type="DNASU" id="34159"/>
<dbReference type="EnsemblMetazoa" id="FBtr0079719">
    <property type="protein sequence ID" value="FBpp0079324"/>
    <property type="gene ID" value="FBgn0263852"/>
</dbReference>
<dbReference type="GeneID" id="34159"/>
<dbReference type="KEGG" id="dme:Dmel_CG13393"/>
<dbReference type="UCSC" id="CG13393-RA">
    <property type="organism name" value="d. melanogaster"/>
</dbReference>
<dbReference type="AGR" id="FB:FBgn0263852"/>
<dbReference type="CTD" id="1603"/>
<dbReference type="FlyBase" id="FBgn0263852">
    <property type="gene designation" value="Dad1"/>
</dbReference>
<dbReference type="VEuPathDB" id="VectorBase:FBgn0263852"/>
<dbReference type="eggNOG" id="KOG1746">
    <property type="taxonomic scope" value="Eukaryota"/>
</dbReference>
<dbReference type="GeneTree" id="ENSGT00390000003324"/>
<dbReference type="HOGENOM" id="CLU_111220_2_1_1"/>
<dbReference type="InParanoid" id="Q9VLM5"/>
<dbReference type="OMA" id="HIILHIV"/>
<dbReference type="OrthoDB" id="445566at2759"/>
<dbReference type="PhylomeDB" id="Q9VLM5"/>
<dbReference type="UniPathway" id="UPA00378"/>
<dbReference type="BioGRID-ORCS" id="34159">
    <property type="hits" value="1 hit in 1 CRISPR screen"/>
</dbReference>
<dbReference type="ChiTaRS" id="Dad">
    <property type="organism name" value="fly"/>
</dbReference>
<dbReference type="GenomeRNAi" id="34159"/>
<dbReference type="PRO" id="PR:Q9VLM5"/>
<dbReference type="Proteomes" id="UP000000803">
    <property type="component" value="Chromosome 2L"/>
</dbReference>
<dbReference type="Bgee" id="FBgn0263852">
    <property type="expression patterns" value="Expressed in eye disc (Drosophila) and 180 other cell types or tissues"/>
</dbReference>
<dbReference type="GO" id="GO:0012505">
    <property type="term" value="C:endomembrane system"/>
    <property type="evidence" value="ECO:0007005"/>
    <property type="project" value="FlyBase"/>
</dbReference>
<dbReference type="GO" id="GO:0005789">
    <property type="term" value="C:endoplasmic reticulum membrane"/>
    <property type="evidence" value="ECO:0000314"/>
    <property type="project" value="UniProtKB"/>
</dbReference>
<dbReference type="GO" id="GO:0008250">
    <property type="term" value="C:oligosaccharyltransferase complex"/>
    <property type="evidence" value="ECO:0000318"/>
    <property type="project" value="GO_Central"/>
</dbReference>
<dbReference type="GO" id="GO:0006915">
    <property type="term" value="P:apoptotic process"/>
    <property type="evidence" value="ECO:0007669"/>
    <property type="project" value="UniProtKB-KW"/>
</dbReference>
<dbReference type="GO" id="GO:0006487">
    <property type="term" value="P:protein N-linked glycosylation"/>
    <property type="evidence" value="ECO:0000315"/>
    <property type="project" value="UniProtKB"/>
</dbReference>
<dbReference type="InterPro" id="IPR003038">
    <property type="entry name" value="DAD/Ost2"/>
</dbReference>
<dbReference type="PANTHER" id="PTHR10705">
    <property type="entry name" value="DOLICHYL-DIPHOSPHOOLIGOSACCHARIDE--PROTEIN GLYCOSYLTRANSFERASE SUBUNIT DAD1"/>
    <property type="match status" value="1"/>
</dbReference>
<dbReference type="PANTHER" id="PTHR10705:SF0">
    <property type="entry name" value="DOLICHYL-DIPHOSPHOOLIGOSACCHARIDE--PROTEIN GLYCOSYLTRANSFERASE SUBUNIT DAD1"/>
    <property type="match status" value="1"/>
</dbReference>
<dbReference type="Pfam" id="PF02109">
    <property type="entry name" value="DAD"/>
    <property type="match status" value="1"/>
</dbReference>
<dbReference type="PIRSF" id="PIRSF005588">
    <property type="entry name" value="DAD"/>
    <property type="match status" value="1"/>
</dbReference>
<protein>
    <recommendedName>
        <fullName>Dolichyl-diphosphooligosaccharide--protein glycosyltransferase subunit DAD1</fullName>
        <shortName>DAD-1</shortName>
        <shortName>Oligosaccharyl transferase subunit DAD1</shortName>
    </recommendedName>
    <alternativeName>
        <fullName evidence="5 7">Defender against apoptotic cell death 1</fullName>
    </alternativeName>
    <alternativeName>
        <fullName evidence="2">Defender against cell death 1</fullName>
    </alternativeName>
</protein>
<gene>
    <name evidence="5 7" type="primary">Dad1</name>
    <name evidence="7" type="synonym">l(2)k12914</name>
    <name evidence="7" type="ORF">CG13393</name>
</gene>
<reference key="1">
    <citation type="journal article" date="2000" name="Science">
        <title>The genome sequence of Drosophila melanogaster.</title>
        <authorList>
            <person name="Adams M.D."/>
            <person name="Celniker S.E."/>
            <person name="Holt R.A."/>
            <person name="Evans C.A."/>
            <person name="Gocayne J.D."/>
            <person name="Amanatides P.G."/>
            <person name="Scherer S.E."/>
            <person name="Li P.W."/>
            <person name="Hoskins R.A."/>
            <person name="Galle R.F."/>
            <person name="George R.A."/>
            <person name="Lewis S.E."/>
            <person name="Richards S."/>
            <person name="Ashburner M."/>
            <person name="Henderson S.N."/>
            <person name="Sutton G.G."/>
            <person name="Wortman J.R."/>
            <person name="Yandell M.D."/>
            <person name="Zhang Q."/>
            <person name="Chen L.X."/>
            <person name="Brandon R.C."/>
            <person name="Rogers Y.-H.C."/>
            <person name="Blazej R.G."/>
            <person name="Champe M."/>
            <person name="Pfeiffer B.D."/>
            <person name="Wan K.H."/>
            <person name="Doyle C."/>
            <person name="Baxter E.G."/>
            <person name="Helt G."/>
            <person name="Nelson C.R."/>
            <person name="Miklos G.L.G."/>
            <person name="Abril J.F."/>
            <person name="Agbayani A."/>
            <person name="An H.-J."/>
            <person name="Andrews-Pfannkoch C."/>
            <person name="Baldwin D."/>
            <person name="Ballew R.M."/>
            <person name="Basu A."/>
            <person name="Baxendale J."/>
            <person name="Bayraktaroglu L."/>
            <person name="Beasley E.M."/>
            <person name="Beeson K.Y."/>
            <person name="Benos P.V."/>
            <person name="Berman B.P."/>
            <person name="Bhandari D."/>
            <person name="Bolshakov S."/>
            <person name="Borkova D."/>
            <person name="Botchan M.R."/>
            <person name="Bouck J."/>
            <person name="Brokstein P."/>
            <person name="Brottier P."/>
            <person name="Burtis K.C."/>
            <person name="Busam D.A."/>
            <person name="Butler H."/>
            <person name="Cadieu E."/>
            <person name="Center A."/>
            <person name="Chandra I."/>
            <person name="Cherry J.M."/>
            <person name="Cawley S."/>
            <person name="Dahlke C."/>
            <person name="Davenport L.B."/>
            <person name="Davies P."/>
            <person name="de Pablos B."/>
            <person name="Delcher A."/>
            <person name="Deng Z."/>
            <person name="Mays A.D."/>
            <person name="Dew I."/>
            <person name="Dietz S.M."/>
            <person name="Dodson K."/>
            <person name="Doup L.E."/>
            <person name="Downes M."/>
            <person name="Dugan-Rocha S."/>
            <person name="Dunkov B.C."/>
            <person name="Dunn P."/>
            <person name="Durbin K.J."/>
            <person name="Evangelista C.C."/>
            <person name="Ferraz C."/>
            <person name="Ferriera S."/>
            <person name="Fleischmann W."/>
            <person name="Fosler C."/>
            <person name="Gabrielian A.E."/>
            <person name="Garg N.S."/>
            <person name="Gelbart W.M."/>
            <person name="Glasser K."/>
            <person name="Glodek A."/>
            <person name="Gong F."/>
            <person name="Gorrell J.H."/>
            <person name="Gu Z."/>
            <person name="Guan P."/>
            <person name="Harris M."/>
            <person name="Harris N.L."/>
            <person name="Harvey D.A."/>
            <person name="Heiman T.J."/>
            <person name="Hernandez J.R."/>
            <person name="Houck J."/>
            <person name="Hostin D."/>
            <person name="Houston K.A."/>
            <person name="Howland T.J."/>
            <person name="Wei M.-H."/>
            <person name="Ibegwam C."/>
            <person name="Jalali M."/>
            <person name="Kalush F."/>
            <person name="Karpen G.H."/>
            <person name="Ke Z."/>
            <person name="Kennison J.A."/>
            <person name="Ketchum K.A."/>
            <person name="Kimmel B.E."/>
            <person name="Kodira C.D."/>
            <person name="Kraft C.L."/>
            <person name="Kravitz S."/>
            <person name="Kulp D."/>
            <person name="Lai Z."/>
            <person name="Lasko P."/>
            <person name="Lei Y."/>
            <person name="Levitsky A.A."/>
            <person name="Li J.H."/>
            <person name="Li Z."/>
            <person name="Liang Y."/>
            <person name="Lin X."/>
            <person name="Liu X."/>
            <person name="Mattei B."/>
            <person name="McIntosh T.C."/>
            <person name="McLeod M.P."/>
            <person name="McPherson D."/>
            <person name="Merkulov G."/>
            <person name="Milshina N.V."/>
            <person name="Mobarry C."/>
            <person name="Morris J."/>
            <person name="Moshrefi A."/>
            <person name="Mount S.M."/>
            <person name="Moy M."/>
            <person name="Murphy B."/>
            <person name="Murphy L."/>
            <person name="Muzny D.M."/>
            <person name="Nelson D.L."/>
            <person name="Nelson D.R."/>
            <person name="Nelson K.A."/>
            <person name="Nixon K."/>
            <person name="Nusskern D.R."/>
            <person name="Pacleb J.M."/>
            <person name="Palazzolo M."/>
            <person name="Pittman G.S."/>
            <person name="Pan S."/>
            <person name="Pollard J."/>
            <person name="Puri V."/>
            <person name="Reese M.G."/>
            <person name="Reinert K."/>
            <person name="Remington K."/>
            <person name="Saunders R.D.C."/>
            <person name="Scheeler F."/>
            <person name="Shen H."/>
            <person name="Shue B.C."/>
            <person name="Siden-Kiamos I."/>
            <person name="Simpson M."/>
            <person name="Skupski M.P."/>
            <person name="Smith T.J."/>
            <person name="Spier E."/>
            <person name="Spradling A.C."/>
            <person name="Stapleton M."/>
            <person name="Strong R."/>
            <person name="Sun E."/>
            <person name="Svirskas R."/>
            <person name="Tector C."/>
            <person name="Turner R."/>
            <person name="Venter E."/>
            <person name="Wang A.H."/>
            <person name="Wang X."/>
            <person name="Wang Z.-Y."/>
            <person name="Wassarman D.A."/>
            <person name="Weinstock G.M."/>
            <person name="Weissenbach J."/>
            <person name="Williams S.M."/>
            <person name="Woodage T."/>
            <person name="Worley K.C."/>
            <person name="Wu D."/>
            <person name="Yang S."/>
            <person name="Yao Q.A."/>
            <person name="Ye J."/>
            <person name="Yeh R.-F."/>
            <person name="Zaveri J.S."/>
            <person name="Zhan M."/>
            <person name="Zhang G."/>
            <person name="Zhao Q."/>
            <person name="Zheng L."/>
            <person name="Zheng X.H."/>
            <person name="Zhong F.N."/>
            <person name="Zhong W."/>
            <person name="Zhou X."/>
            <person name="Zhu S.C."/>
            <person name="Zhu X."/>
            <person name="Smith H.O."/>
            <person name="Gibbs R.A."/>
            <person name="Myers E.W."/>
            <person name="Rubin G.M."/>
            <person name="Venter J.C."/>
        </authorList>
    </citation>
    <scope>NUCLEOTIDE SEQUENCE [LARGE SCALE GENOMIC DNA]</scope>
    <source>
        <strain>Berkeley</strain>
    </source>
</reference>
<reference key="2">
    <citation type="journal article" date="2002" name="Genome Biol.">
        <title>Annotation of the Drosophila melanogaster euchromatic genome: a systematic review.</title>
        <authorList>
            <person name="Misra S."/>
            <person name="Crosby M.A."/>
            <person name="Mungall C.J."/>
            <person name="Matthews B.B."/>
            <person name="Campbell K.S."/>
            <person name="Hradecky P."/>
            <person name="Huang Y."/>
            <person name="Kaminker J.S."/>
            <person name="Millburn G.H."/>
            <person name="Prochnik S.E."/>
            <person name="Smith C.D."/>
            <person name="Tupy J.L."/>
            <person name="Whitfield E.J."/>
            <person name="Bayraktaroglu L."/>
            <person name="Berman B.P."/>
            <person name="Bettencourt B.R."/>
            <person name="Celniker S.E."/>
            <person name="de Grey A.D.N.J."/>
            <person name="Drysdale R.A."/>
            <person name="Harris N.L."/>
            <person name="Richter J."/>
            <person name="Russo S."/>
            <person name="Schroeder A.J."/>
            <person name="Shu S.Q."/>
            <person name="Stapleton M."/>
            <person name="Yamada C."/>
            <person name="Ashburner M."/>
            <person name="Gelbart W.M."/>
            <person name="Rubin G.M."/>
            <person name="Lewis S.E."/>
        </authorList>
    </citation>
    <scope>GENOME REANNOTATION</scope>
    <source>
        <strain>Berkeley</strain>
    </source>
</reference>
<reference key="3">
    <citation type="journal article" date="2002" name="Genome Biol.">
        <title>A Drosophila full-length cDNA resource.</title>
        <authorList>
            <person name="Stapleton M."/>
            <person name="Carlson J.W."/>
            <person name="Brokstein P."/>
            <person name="Yu C."/>
            <person name="Champe M."/>
            <person name="George R.A."/>
            <person name="Guarin H."/>
            <person name="Kronmiller B."/>
            <person name="Pacleb J.M."/>
            <person name="Park S."/>
            <person name="Wan K.H."/>
            <person name="Rubin G.M."/>
            <person name="Celniker S.E."/>
        </authorList>
    </citation>
    <scope>NUCLEOTIDE SEQUENCE [LARGE SCALE MRNA]</scope>
    <source>
        <strain>Berkeley</strain>
        <tissue>Embryo</tissue>
    </source>
</reference>
<reference key="4">
    <citation type="submission" date="2016-07" db="EMBL/GenBank/DDBJ databases">
        <authorList>
            <person name="Florea S."/>
            <person name="Webb J.S."/>
            <person name="Jaromczyk J."/>
            <person name="Schardl C.L."/>
        </authorList>
    </citation>
    <scope>NUCLEOTIDE SEQUENCE [LARGE SCALE MRNA]</scope>
</reference>
<reference key="5">
    <citation type="journal article" date="2016" name="Dev. Biol.">
        <title>The defender against apoptotic cell death 1 gene is required for tissue growth and efficient N-glycosylation in Drosophila melanogaster.</title>
        <authorList>
            <person name="Zhang Y."/>
            <person name="Cui C."/>
            <person name="Lai Z.C."/>
        </authorList>
    </citation>
    <scope>FUNCTION</scope>
    <scope>PATHWAY</scope>
    <scope>SUBUNIT</scope>
    <scope>SUBCELLULAR LOCATION</scope>
    <scope>DISRUPTION PHENOTYPE</scope>
</reference>
<name>DAD1_DROME</name>
<comment type="function">
    <text evidence="1 4">Subunit of the oligosaccharyl transferase (OST) complex that catalyzes the initial transfer of a defined glycan (Glc(3)Man(9)GlcNAc(2) in eukaryotes) from the lipid carrier dolichol-pyrophosphate to an asparagine residue within an Asn-X-Ser/Thr consensus motif in nascent polypeptide chains, the first step in protein N-glycosylation. N-glycosylation occurs cotranslationally and the complex associates with the Sec61 complex at the channel-forming translocon complex that mediates protein translocation across the endoplasmic reticulum (ER). All subunits are required for a maximal enzyme activity (By similarity). Probably as part of the N-glycosylation pathway, plays a role in the regulation of tissue growth and apoptosis (PubMed:27693235).</text>
</comment>
<comment type="pathway">
    <text evidence="4">Protein modification; protein glycosylation.</text>
</comment>
<comment type="subunit">
    <text evidence="1">Component of the oligosaccharyltransferase (OST) complex.</text>
</comment>
<comment type="interaction">
    <interactant intactId="EBI-26767216">
        <id>Q9VLM5</id>
    </interactant>
    <interactant intactId="EBI-113522">
        <id>Q9VUZ0</id>
        <label>SsRbeta</label>
    </interactant>
    <organismsDiffer>false</organismsDiffer>
    <experiments>3</experiments>
</comment>
<comment type="subcellular location">
    <subcellularLocation>
        <location evidence="4">Endoplasmic reticulum membrane</location>
        <topology evidence="3">Multi-pass membrane protein</topology>
    </subcellularLocation>
</comment>
<comment type="disruption phenotype">
    <text evidence="4">Lethal (PubMed:27693235). RNAi-mediated knockdown in the wing results in a moderate decrease in wing size, decreased N-glycosylation, increased cell-death mediated by the JNK pathway and increased ER stress mediated by the unfolded protein response pathway (PubMed:27693235).</text>
</comment>
<comment type="similarity">
    <text evidence="6">Belongs to the DAD/OST2 family.</text>
</comment>
<organism>
    <name type="scientific">Drosophila melanogaster</name>
    <name type="common">Fruit fly</name>
    <dbReference type="NCBI Taxonomy" id="7227"/>
    <lineage>
        <taxon>Eukaryota</taxon>
        <taxon>Metazoa</taxon>
        <taxon>Ecdysozoa</taxon>
        <taxon>Arthropoda</taxon>
        <taxon>Hexapoda</taxon>
        <taxon>Insecta</taxon>
        <taxon>Pterygota</taxon>
        <taxon>Neoptera</taxon>
        <taxon>Endopterygota</taxon>
        <taxon>Diptera</taxon>
        <taxon>Brachycera</taxon>
        <taxon>Muscomorpha</taxon>
        <taxon>Ephydroidea</taxon>
        <taxon>Drosophilidae</taxon>
        <taxon>Drosophila</taxon>
        <taxon>Sophophora</taxon>
    </lineage>
</organism>